<proteinExistence type="inferred from homology"/>
<dbReference type="EC" id="1.1.1.37" evidence="1"/>
<dbReference type="EMBL" id="CP000053">
    <property type="protein sequence ID" value="AAY61441.1"/>
    <property type="molecule type" value="Genomic_DNA"/>
</dbReference>
<dbReference type="SMR" id="Q4ULY2"/>
<dbReference type="STRING" id="315456.RF_0590"/>
<dbReference type="KEGG" id="rfe:RF_0590"/>
<dbReference type="eggNOG" id="COG0039">
    <property type="taxonomic scope" value="Bacteria"/>
</dbReference>
<dbReference type="HOGENOM" id="CLU_045401_2_1_5"/>
<dbReference type="OrthoDB" id="9802969at2"/>
<dbReference type="Proteomes" id="UP000008548">
    <property type="component" value="Chromosome"/>
</dbReference>
<dbReference type="GO" id="GO:0004459">
    <property type="term" value="F:L-lactate dehydrogenase activity"/>
    <property type="evidence" value="ECO:0007669"/>
    <property type="project" value="TreeGrafter"/>
</dbReference>
<dbReference type="GO" id="GO:0030060">
    <property type="term" value="F:L-malate dehydrogenase (NAD+) activity"/>
    <property type="evidence" value="ECO:0007669"/>
    <property type="project" value="UniProtKB-UniRule"/>
</dbReference>
<dbReference type="GO" id="GO:0006089">
    <property type="term" value="P:lactate metabolic process"/>
    <property type="evidence" value="ECO:0007669"/>
    <property type="project" value="TreeGrafter"/>
</dbReference>
<dbReference type="GO" id="GO:0006099">
    <property type="term" value="P:tricarboxylic acid cycle"/>
    <property type="evidence" value="ECO:0007669"/>
    <property type="project" value="UniProtKB-UniRule"/>
</dbReference>
<dbReference type="CDD" id="cd01339">
    <property type="entry name" value="LDH-like_MDH"/>
    <property type="match status" value="1"/>
</dbReference>
<dbReference type="FunFam" id="3.40.50.720:FF:000018">
    <property type="entry name" value="Malate dehydrogenase"/>
    <property type="match status" value="1"/>
</dbReference>
<dbReference type="FunFam" id="3.90.110.10:FF:000004">
    <property type="entry name" value="Malate dehydrogenase"/>
    <property type="match status" value="1"/>
</dbReference>
<dbReference type="Gene3D" id="3.90.110.10">
    <property type="entry name" value="Lactate dehydrogenase/glycoside hydrolase, family 4, C-terminal"/>
    <property type="match status" value="1"/>
</dbReference>
<dbReference type="Gene3D" id="3.40.50.720">
    <property type="entry name" value="NAD(P)-binding Rossmann-like Domain"/>
    <property type="match status" value="1"/>
</dbReference>
<dbReference type="HAMAP" id="MF_00487">
    <property type="entry name" value="Malate_dehydrog_3"/>
    <property type="match status" value="1"/>
</dbReference>
<dbReference type="InterPro" id="IPR001557">
    <property type="entry name" value="L-lactate/malate_DH"/>
</dbReference>
<dbReference type="InterPro" id="IPR022383">
    <property type="entry name" value="Lactate/malate_DH_C"/>
</dbReference>
<dbReference type="InterPro" id="IPR001236">
    <property type="entry name" value="Lactate/malate_DH_N"/>
</dbReference>
<dbReference type="InterPro" id="IPR015955">
    <property type="entry name" value="Lactate_DH/Glyco_Ohase_4_C"/>
</dbReference>
<dbReference type="InterPro" id="IPR011275">
    <property type="entry name" value="Malate_DH_type3"/>
</dbReference>
<dbReference type="InterPro" id="IPR036291">
    <property type="entry name" value="NAD(P)-bd_dom_sf"/>
</dbReference>
<dbReference type="NCBIfam" id="TIGR01763">
    <property type="entry name" value="MalateDH_bact"/>
    <property type="match status" value="1"/>
</dbReference>
<dbReference type="NCBIfam" id="NF004863">
    <property type="entry name" value="PRK06223.1"/>
    <property type="match status" value="1"/>
</dbReference>
<dbReference type="PANTHER" id="PTHR43128">
    <property type="entry name" value="L-2-HYDROXYCARBOXYLATE DEHYDROGENASE (NAD(P)(+))"/>
    <property type="match status" value="1"/>
</dbReference>
<dbReference type="PANTHER" id="PTHR43128:SF16">
    <property type="entry name" value="L-LACTATE DEHYDROGENASE"/>
    <property type="match status" value="1"/>
</dbReference>
<dbReference type="Pfam" id="PF02866">
    <property type="entry name" value="Ldh_1_C"/>
    <property type="match status" value="1"/>
</dbReference>
<dbReference type="Pfam" id="PF00056">
    <property type="entry name" value="Ldh_1_N"/>
    <property type="match status" value="1"/>
</dbReference>
<dbReference type="PIRSF" id="PIRSF000102">
    <property type="entry name" value="Lac_mal_DH"/>
    <property type="match status" value="1"/>
</dbReference>
<dbReference type="PRINTS" id="PR00086">
    <property type="entry name" value="LLDHDRGNASE"/>
</dbReference>
<dbReference type="SUPFAM" id="SSF56327">
    <property type="entry name" value="LDH C-terminal domain-like"/>
    <property type="match status" value="1"/>
</dbReference>
<dbReference type="SUPFAM" id="SSF51735">
    <property type="entry name" value="NAD(P)-binding Rossmann-fold domains"/>
    <property type="match status" value="1"/>
</dbReference>
<name>MDH_RICFE</name>
<protein>
    <recommendedName>
        <fullName evidence="1">Malate dehydrogenase</fullName>
        <ecNumber evidence="1">1.1.1.37</ecNumber>
    </recommendedName>
</protein>
<reference key="1">
    <citation type="journal article" date="2005" name="PLoS Biol.">
        <title>The genome sequence of Rickettsia felis identifies the first putative conjugative plasmid in an obligate intracellular parasite.</title>
        <authorList>
            <person name="Ogata H."/>
            <person name="Renesto P."/>
            <person name="Audic S."/>
            <person name="Robert C."/>
            <person name="Blanc G."/>
            <person name="Fournier P.-E."/>
            <person name="Parinello H."/>
            <person name="Claverie J.-M."/>
            <person name="Raoult D."/>
        </authorList>
    </citation>
    <scope>NUCLEOTIDE SEQUENCE [LARGE SCALE GENOMIC DNA]</scope>
    <source>
        <strain>ATCC VR-1525 / URRWXCal2</strain>
    </source>
</reference>
<accession>Q4ULY2</accession>
<gene>
    <name evidence="1" type="primary">mdh</name>
    <name type="ordered locus">RF_0590</name>
</gene>
<comment type="function">
    <text evidence="1">Catalyzes the reversible oxidation of malate to oxaloacetate.</text>
</comment>
<comment type="catalytic activity">
    <reaction evidence="1">
        <text>(S)-malate + NAD(+) = oxaloacetate + NADH + H(+)</text>
        <dbReference type="Rhea" id="RHEA:21432"/>
        <dbReference type="ChEBI" id="CHEBI:15378"/>
        <dbReference type="ChEBI" id="CHEBI:15589"/>
        <dbReference type="ChEBI" id="CHEBI:16452"/>
        <dbReference type="ChEBI" id="CHEBI:57540"/>
        <dbReference type="ChEBI" id="CHEBI:57945"/>
        <dbReference type="EC" id="1.1.1.37"/>
    </reaction>
</comment>
<comment type="similarity">
    <text evidence="1">Belongs to the LDH/MDH superfamily. MDH type 3 family.</text>
</comment>
<feature type="chain" id="PRO_0000113468" description="Malate dehydrogenase">
    <location>
        <begin position="1"/>
        <end position="314"/>
    </location>
</feature>
<feature type="active site" description="Proton acceptor" evidence="1">
    <location>
        <position position="177"/>
    </location>
</feature>
<feature type="binding site" evidence="1">
    <location>
        <begin position="11"/>
        <end position="16"/>
    </location>
    <ligand>
        <name>NAD(+)</name>
        <dbReference type="ChEBI" id="CHEBI:57540"/>
    </ligand>
</feature>
<feature type="binding site" evidence="1">
    <location>
        <position position="35"/>
    </location>
    <ligand>
        <name>NAD(+)</name>
        <dbReference type="ChEBI" id="CHEBI:57540"/>
    </ligand>
</feature>
<feature type="binding site" evidence="1">
    <location>
        <position position="84"/>
    </location>
    <ligand>
        <name>substrate</name>
    </ligand>
</feature>
<feature type="binding site" evidence="1">
    <location>
        <position position="90"/>
    </location>
    <ligand>
        <name>substrate</name>
    </ligand>
</feature>
<feature type="binding site" evidence="1">
    <location>
        <position position="97"/>
    </location>
    <ligand>
        <name>NAD(+)</name>
        <dbReference type="ChEBI" id="CHEBI:57540"/>
    </ligand>
</feature>
<feature type="binding site" evidence="1">
    <location>
        <begin position="120"/>
        <end position="122"/>
    </location>
    <ligand>
        <name>NAD(+)</name>
        <dbReference type="ChEBI" id="CHEBI:57540"/>
    </ligand>
</feature>
<feature type="binding site" evidence="1">
    <location>
        <position position="122"/>
    </location>
    <ligand>
        <name>substrate</name>
    </ligand>
</feature>
<feature type="binding site" evidence="1">
    <location>
        <position position="153"/>
    </location>
    <ligand>
        <name>substrate</name>
    </ligand>
</feature>
<organism>
    <name type="scientific">Rickettsia felis (strain ATCC VR-1525 / URRWXCal2)</name>
    <name type="common">Rickettsia azadi</name>
    <dbReference type="NCBI Taxonomy" id="315456"/>
    <lineage>
        <taxon>Bacteria</taxon>
        <taxon>Pseudomonadati</taxon>
        <taxon>Pseudomonadota</taxon>
        <taxon>Alphaproteobacteria</taxon>
        <taxon>Rickettsiales</taxon>
        <taxon>Rickettsiaceae</taxon>
        <taxon>Rickettsieae</taxon>
        <taxon>Rickettsia</taxon>
        <taxon>spotted fever group</taxon>
    </lineage>
</organism>
<sequence>MKKNPKISLIGSGNIGGTLAHLISLRNLGDIVLFDVAEGVPQGKALDLMQAGTIAGSDIKIKGTNDYKDIEGSDAIIITAGLPRKPGISRDDLISINTGIMKNVAENVKKYAPDAFVIVITNPLDVMVYVMLKESGLPHNKVIGMAGVLDSSRFNLFLAEEFKVSVSNVNSTVLGGHGDAMVPLARYSTISGVPIPDLIKMGLSSNKNIEKIIDRTRNGGGEIVALLKTGSAYYAPAASAIEMLEAYLKDKRQILTCAAYLQGEYGVNDLYVGVPIIIGKEGVIKVVELQLTKEEKALFDKSVEGVKKLLDTIK</sequence>
<keyword id="KW-0520">NAD</keyword>
<keyword id="KW-0560">Oxidoreductase</keyword>
<keyword id="KW-0816">Tricarboxylic acid cycle</keyword>
<evidence type="ECO:0000255" key="1">
    <source>
        <dbReference type="HAMAP-Rule" id="MF_00487"/>
    </source>
</evidence>